<dbReference type="EMBL" id="CP000034">
    <property type="protein sequence ID" value="ABB62708.1"/>
    <property type="status" value="ALT_INIT"/>
    <property type="molecule type" value="Genomic_DNA"/>
</dbReference>
<dbReference type="RefSeq" id="WP_000383836.1">
    <property type="nucleotide sequence ID" value="NC_007606.1"/>
</dbReference>
<dbReference type="RefSeq" id="YP_404199.2">
    <property type="nucleotide sequence ID" value="NC_007606.1"/>
</dbReference>
<dbReference type="SMR" id="Q32D97"/>
<dbReference type="STRING" id="300267.SDY_2657"/>
<dbReference type="EnsemblBacteria" id="ABB62708">
    <property type="protein sequence ID" value="ABB62708"/>
    <property type="gene ID" value="SDY_2657"/>
</dbReference>
<dbReference type="KEGG" id="sdy:SDY_2657"/>
<dbReference type="PATRIC" id="fig|300267.13.peg.3206"/>
<dbReference type="HOGENOM" id="CLU_198936_0_0_6"/>
<dbReference type="Proteomes" id="UP000002716">
    <property type="component" value="Chromosome"/>
</dbReference>
<dbReference type="GO" id="GO:0005886">
    <property type="term" value="C:plasma membrane"/>
    <property type="evidence" value="ECO:0007669"/>
    <property type="project" value="UniProtKB-SubCell"/>
</dbReference>
<dbReference type="HAMAP" id="MF_01566">
    <property type="entry name" value="UPF0370"/>
    <property type="match status" value="1"/>
</dbReference>
<dbReference type="InterPro" id="IPR020910">
    <property type="entry name" value="UPF0370"/>
</dbReference>
<dbReference type="NCBIfam" id="NF010185">
    <property type="entry name" value="PRK13664.1"/>
    <property type="match status" value="1"/>
</dbReference>
<dbReference type="Pfam" id="PF13980">
    <property type="entry name" value="UPF0370"/>
    <property type="match status" value="1"/>
</dbReference>
<reference key="1">
    <citation type="journal article" date="2005" name="Nucleic Acids Res.">
        <title>Genome dynamics and diversity of Shigella species, the etiologic agents of bacillary dysentery.</title>
        <authorList>
            <person name="Yang F."/>
            <person name="Yang J."/>
            <person name="Zhang X."/>
            <person name="Chen L."/>
            <person name="Jiang Y."/>
            <person name="Yan Y."/>
            <person name="Tang X."/>
            <person name="Wang J."/>
            <person name="Xiong Z."/>
            <person name="Dong J."/>
            <person name="Xue Y."/>
            <person name="Zhu Y."/>
            <person name="Xu X."/>
            <person name="Sun L."/>
            <person name="Chen S."/>
            <person name="Nie H."/>
            <person name="Peng J."/>
            <person name="Xu J."/>
            <person name="Wang Y."/>
            <person name="Yuan Z."/>
            <person name="Wen Y."/>
            <person name="Yao Z."/>
            <person name="Shen Y."/>
            <person name="Qiang B."/>
            <person name="Hou Y."/>
            <person name="Yu J."/>
            <person name="Jin Q."/>
        </authorList>
    </citation>
    <scope>NUCLEOTIDE SEQUENCE [LARGE SCALE GENOMIC DNA]</scope>
    <source>
        <strain>Sd197</strain>
    </source>
</reference>
<gene>
    <name evidence="1" type="primary">ypfN</name>
    <name type="ordered locus">SDY_2657</name>
</gene>
<accession>Q32D97</accession>
<comment type="subcellular location">
    <subcellularLocation>
        <location evidence="1">Cell membrane</location>
        <topology evidence="1">Single-pass membrane protein</topology>
    </subcellularLocation>
</comment>
<comment type="similarity">
    <text evidence="1">Belongs to the UPF0370 family.</text>
</comment>
<comment type="sequence caution" evidence="3">
    <conflict type="erroneous initiation">
        <sequence resource="EMBL-CDS" id="ABB62708"/>
    </conflict>
</comment>
<protein>
    <recommendedName>
        <fullName evidence="1">UPF0370 protein YpfN</fullName>
    </recommendedName>
</protein>
<feature type="chain" id="PRO_0000244551" description="UPF0370 protein YpfN">
    <location>
        <begin position="1"/>
        <end position="66"/>
    </location>
</feature>
<feature type="transmembrane region" description="Helical" evidence="1">
    <location>
        <begin position="4"/>
        <end position="24"/>
    </location>
</feature>
<feature type="region of interest" description="Disordered" evidence="2">
    <location>
        <begin position="39"/>
        <end position="66"/>
    </location>
</feature>
<feature type="compositionally biased region" description="Basic and acidic residues" evidence="2">
    <location>
        <begin position="42"/>
        <end position="51"/>
    </location>
</feature>
<organism>
    <name type="scientific">Shigella dysenteriae serotype 1 (strain Sd197)</name>
    <dbReference type="NCBI Taxonomy" id="300267"/>
    <lineage>
        <taxon>Bacteria</taxon>
        <taxon>Pseudomonadati</taxon>
        <taxon>Pseudomonadota</taxon>
        <taxon>Gammaproteobacteria</taxon>
        <taxon>Enterobacterales</taxon>
        <taxon>Enterobacteriaceae</taxon>
        <taxon>Shigella</taxon>
    </lineage>
</organism>
<name>YPFN_SHIDS</name>
<sequence>MDWLAKYWWILVIVFLVGVLLNVIKDLKRVDHKKFLANKPELPPHRDFNDKWDDDDDWPKKDQPKK</sequence>
<proteinExistence type="inferred from homology"/>
<keyword id="KW-1003">Cell membrane</keyword>
<keyword id="KW-0472">Membrane</keyword>
<keyword id="KW-1185">Reference proteome</keyword>
<keyword id="KW-0812">Transmembrane</keyword>
<keyword id="KW-1133">Transmembrane helix</keyword>
<evidence type="ECO:0000255" key="1">
    <source>
        <dbReference type="HAMAP-Rule" id="MF_01566"/>
    </source>
</evidence>
<evidence type="ECO:0000256" key="2">
    <source>
        <dbReference type="SAM" id="MobiDB-lite"/>
    </source>
</evidence>
<evidence type="ECO:0000305" key="3"/>